<reference key="1">
    <citation type="journal article" date="2016" name="Chem. Commun. (Camb.)">
        <title>Identification of genes encoding squalestatin S1 biosynthesis and in vitro production of new squalestatin analogues.</title>
        <authorList>
            <person name="Bonsch B."/>
            <person name="Belt V."/>
            <person name="Bartel C."/>
            <person name="Duensing N."/>
            <person name="Koziol M."/>
            <person name="Lazarus C.M."/>
            <person name="Bailey A.M."/>
            <person name="Simpson T.J."/>
            <person name="Cox R.J."/>
        </authorList>
    </citation>
    <scope>NUCLEOTIDE SEQUENCE [GENOMIC DNA]</scope>
    <scope>FUNCTION</scope>
</reference>
<keyword id="KW-0325">Glycoprotein</keyword>
<keyword id="KW-0472">Membrane</keyword>
<keyword id="KW-0812">Transmembrane</keyword>
<keyword id="KW-1133">Transmembrane helix</keyword>
<keyword id="KW-0813">Transport</keyword>
<dbReference type="EMBL" id="KU946987">
    <property type="protein sequence ID" value="AMY15063.1"/>
    <property type="molecule type" value="Genomic_DNA"/>
</dbReference>
<dbReference type="SMR" id="A0A3G1DIJ8"/>
<dbReference type="GlyCosmos" id="A0A3G1DIJ8">
    <property type="glycosylation" value="4 sites, No reported glycans"/>
</dbReference>
<dbReference type="GO" id="GO:0005886">
    <property type="term" value="C:plasma membrane"/>
    <property type="evidence" value="ECO:0007669"/>
    <property type="project" value="TreeGrafter"/>
</dbReference>
<dbReference type="GO" id="GO:0022857">
    <property type="term" value="F:transmembrane transporter activity"/>
    <property type="evidence" value="ECO:0007669"/>
    <property type="project" value="InterPro"/>
</dbReference>
<dbReference type="FunFam" id="1.20.1250.20:FF:000172">
    <property type="entry name" value="MFS multidrug resistance transporter"/>
    <property type="match status" value="1"/>
</dbReference>
<dbReference type="FunFam" id="1.20.1720.10:FF:000009">
    <property type="entry name" value="MFS multidrug transporter"/>
    <property type="match status" value="1"/>
</dbReference>
<dbReference type="Gene3D" id="1.20.1250.20">
    <property type="entry name" value="MFS general substrate transporter like domains"/>
    <property type="match status" value="1"/>
</dbReference>
<dbReference type="InterPro" id="IPR011701">
    <property type="entry name" value="MFS"/>
</dbReference>
<dbReference type="InterPro" id="IPR020846">
    <property type="entry name" value="MFS_dom"/>
</dbReference>
<dbReference type="InterPro" id="IPR036259">
    <property type="entry name" value="MFS_trans_sf"/>
</dbReference>
<dbReference type="PANTHER" id="PTHR23502">
    <property type="entry name" value="MAJOR FACILITATOR SUPERFAMILY"/>
    <property type="match status" value="1"/>
</dbReference>
<dbReference type="PANTHER" id="PTHR23502:SF51">
    <property type="entry name" value="QUINIDINE RESISTANCE PROTEIN 1-RELATED"/>
    <property type="match status" value="1"/>
</dbReference>
<dbReference type="Pfam" id="PF07690">
    <property type="entry name" value="MFS_1"/>
    <property type="match status" value="1"/>
</dbReference>
<dbReference type="SUPFAM" id="SSF103473">
    <property type="entry name" value="MFS general substrate transporter"/>
    <property type="match status" value="1"/>
</dbReference>
<dbReference type="PROSITE" id="PS50850">
    <property type="entry name" value="MFS"/>
    <property type="match status" value="1"/>
</dbReference>
<accession>A0A3G1DIJ8</accession>
<organism>
    <name type="scientific">Phoma sp. (strain ATCC 20986 / MF5453)</name>
    <dbReference type="NCBI Taxonomy" id="1828523"/>
    <lineage>
        <taxon>Eukaryota</taxon>
        <taxon>Fungi</taxon>
        <taxon>Dikarya</taxon>
        <taxon>Ascomycota</taxon>
        <taxon>Pezizomycotina</taxon>
        <taxon>Dothideomycetes</taxon>
        <taxon>Pleosporomycetidae</taxon>
        <taxon>Pleosporales</taxon>
        <taxon>Pleosporineae</taxon>
        <taxon>Didymellaceae</taxon>
        <taxon>Phoma</taxon>
    </lineage>
</organism>
<name>MFM6_PHOSM</name>
<feature type="chain" id="PRO_0000447831" description="MFS-type transporter M6">
    <location>
        <begin position="1"/>
        <end position="547"/>
    </location>
</feature>
<feature type="transmembrane region" description="Helical" evidence="1">
    <location>
        <begin position="81"/>
        <end position="101"/>
    </location>
</feature>
<feature type="transmembrane region" description="Helical" evidence="1">
    <location>
        <begin position="146"/>
        <end position="166"/>
    </location>
</feature>
<feature type="transmembrane region" description="Helical" evidence="1">
    <location>
        <begin position="206"/>
        <end position="226"/>
    </location>
</feature>
<feature type="transmembrane region" description="Helical" evidence="1">
    <location>
        <begin position="236"/>
        <end position="256"/>
    </location>
</feature>
<feature type="transmembrane region" description="Helical" evidence="1">
    <location>
        <begin position="317"/>
        <end position="337"/>
    </location>
</feature>
<feature type="transmembrane region" description="Helical" evidence="1">
    <location>
        <begin position="347"/>
        <end position="367"/>
    </location>
</feature>
<feature type="transmembrane region" description="Helical" evidence="1">
    <location>
        <begin position="407"/>
        <end position="427"/>
    </location>
</feature>
<feature type="transmembrane region" description="Helical" evidence="1">
    <location>
        <begin position="432"/>
        <end position="452"/>
    </location>
</feature>
<feature type="transmembrane region" description="Helical" evidence="1">
    <location>
        <begin position="469"/>
        <end position="489"/>
    </location>
</feature>
<feature type="transmembrane region" description="Helical" evidence="1">
    <location>
        <begin position="496"/>
        <end position="516"/>
    </location>
</feature>
<feature type="region of interest" description="Disordered" evidence="3">
    <location>
        <begin position="1"/>
        <end position="45"/>
    </location>
</feature>
<feature type="glycosylation site" description="N-linked (GlcNAc...) asparagine" evidence="2">
    <location>
        <position position="118"/>
    </location>
</feature>
<feature type="glycosylation site" description="N-linked (GlcNAc...) asparagine" evidence="2">
    <location>
        <position position="167"/>
    </location>
</feature>
<feature type="glycosylation site" description="N-linked (GlcNAc...) asparagine" evidence="2">
    <location>
        <position position="274"/>
    </location>
</feature>
<feature type="glycosylation site" description="N-linked (GlcNAc...) asparagine" evidence="2">
    <location>
        <position position="493"/>
    </location>
</feature>
<sequence>MHRRRRDNLMTPAEMVASMKPPQSLSTEDDDGSRRDSESSADVLKSNEEFQARMIPEDDDANSVTAQPTWTVLSDTEIKSVLVVASFAAAISPFSTSTYYPAVFAISQDLGVSVSKINLTMSSYQIFQGVAPTITAAFADTYGRRPMFLVCFAIYFVANVGLALQNNFTTLLVLRCLQSTGSSGTFALAQAVTADITTRAERGRYLIYATLGSTLGPFLGPVIGGLLVKFLGWRSVFWFLLCMGTVFALLIFIFFGETARPIVGDGSVPPQSWNRSFLQIRSKGITSLKPNLASLERRKSRPNPLTSLALLWDRENFILSVSGGLLYAGYSSVTSVLASQLQQRYKYDAVQVGLCYLPVGFGSLLAYRTTVRLMDWNFEREAKKQGLVIVKNQQTDITRFDLEKARLGFVFPMILVCSVLLVAYGWQMHYHAPLAPILVTMFLIAIILTGVMNAIAALLTDVNRENAAAVGAAMNLTRLLLGAGAVAVVGPLNKSAGIGWTATVTAGLWVLMMPTLRMVYRDGFVWRAGENERVHASNVELAALVRS</sequence>
<evidence type="ECO:0000255" key="1"/>
<evidence type="ECO:0000255" key="2">
    <source>
        <dbReference type="PROSITE-ProRule" id="PRU00498"/>
    </source>
</evidence>
<evidence type="ECO:0000256" key="3">
    <source>
        <dbReference type="SAM" id="MobiDB-lite"/>
    </source>
</evidence>
<evidence type="ECO:0000303" key="4">
    <source>
    </source>
</evidence>
<evidence type="ECO:0000305" key="5"/>
<evidence type="ECO:0000305" key="6">
    <source>
    </source>
</evidence>
<protein>
    <recommendedName>
        <fullName evidence="4">MFS-type transporter M6</fullName>
    </recommendedName>
    <alternativeName>
        <fullName evidence="4">Squalestatin S1 biosynthesis cluster protein M6</fullName>
    </alternativeName>
</protein>
<proteinExistence type="inferred from homology"/>
<comment type="function">
    <text evidence="6">MFS-type transporter; part of the gene cluster that mediates the biosynthesis of squalestatin S1 (SQS1, also known as zaragozic acid A), a heavily oxidized fungal polyketide that offers potent cholesterol lowering activity by targeting squalene synthase (SS).</text>
</comment>
<comment type="subcellular location">
    <subcellularLocation>
        <location evidence="1">Membrane</location>
        <topology evidence="1">Multi-pass membrane protein</topology>
    </subcellularLocation>
</comment>
<comment type="similarity">
    <text evidence="5">Belongs to the major facilitator superfamily. CAR1 family.</text>
</comment>
<gene>
    <name evidence="4" type="primary">M6</name>
</gene>